<evidence type="ECO:0000255" key="1">
    <source>
        <dbReference type="HAMAP-Rule" id="MF_01523"/>
    </source>
</evidence>
<name>RSMJ_SHELP</name>
<organism>
    <name type="scientific">Shewanella loihica (strain ATCC BAA-1088 / PV-4)</name>
    <dbReference type="NCBI Taxonomy" id="323850"/>
    <lineage>
        <taxon>Bacteria</taxon>
        <taxon>Pseudomonadati</taxon>
        <taxon>Pseudomonadota</taxon>
        <taxon>Gammaproteobacteria</taxon>
        <taxon>Alteromonadales</taxon>
        <taxon>Shewanellaceae</taxon>
        <taxon>Shewanella</taxon>
    </lineage>
</organism>
<dbReference type="EC" id="2.1.1.242" evidence="1"/>
<dbReference type="EMBL" id="CP000606">
    <property type="protein sequence ID" value="ABO25513.1"/>
    <property type="molecule type" value="Genomic_DNA"/>
</dbReference>
<dbReference type="RefSeq" id="WP_011867441.1">
    <property type="nucleotide sequence ID" value="NC_009092.1"/>
</dbReference>
<dbReference type="SMR" id="A3QJ65"/>
<dbReference type="STRING" id="323850.Shew_3647"/>
<dbReference type="KEGG" id="slo:Shew_3647"/>
<dbReference type="eggNOG" id="COG0742">
    <property type="taxonomic scope" value="Bacteria"/>
</dbReference>
<dbReference type="HOGENOM" id="CLU_076324_0_0_6"/>
<dbReference type="Proteomes" id="UP000001558">
    <property type="component" value="Chromosome"/>
</dbReference>
<dbReference type="GO" id="GO:0005737">
    <property type="term" value="C:cytoplasm"/>
    <property type="evidence" value="ECO:0007669"/>
    <property type="project" value="UniProtKB-SubCell"/>
</dbReference>
<dbReference type="GO" id="GO:0008990">
    <property type="term" value="F:rRNA (guanine-N2-)-methyltransferase activity"/>
    <property type="evidence" value="ECO:0007669"/>
    <property type="project" value="UniProtKB-UniRule"/>
</dbReference>
<dbReference type="CDD" id="cd02440">
    <property type="entry name" value="AdoMet_MTases"/>
    <property type="match status" value="1"/>
</dbReference>
<dbReference type="Gene3D" id="3.40.50.150">
    <property type="entry name" value="Vaccinia Virus protein VP39"/>
    <property type="match status" value="1"/>
</dbReference>
<dbReference type="Gene3D" id="3.40.1630.10">
    <property type="entry name" value="YhiQ-like domain"/>
    <property type="match status" value="1"/>
</dbReference>
<dbReference type="HAMAP" id="MF_01523">
    <property type="entry name" value="16SrRNA_methyltr_J"/>
    <property type="match status" value="1"/>
</dbReference>
<dbReference type="InterPro" id="IPR007536">
    <property type="entry name" value="16SrRNA_methylTrfase_J"/>
</dbReference>
<dbReference type="InterPro" id="IPR029063">
    <property type="entry name" value="SAM-dependent_MTases_sf"/>
</dbReference>
<dbReference type="PANTHER" id="PTHR36112">
    <property type="entry name" value="RIBOSOMAL RNA SMALL SUBUNIT METHYLTRANSFERASE J"/>
    <property type="match status" value="1"/>
</dbReference>
<dbReference type="PANTHER" id="PTHR36112:SF1">
    <property type="entry name" value="RIBOSOMAL RNA SMALL SUBUNIT METHYLTRANSFERASE J"/>
    <property type="match status" value="1"/>
</dbReference>
<dbReference type="Pfam" id="PF04445">
    <property type="entry name" value="SAM_MT"/>
    <property type="match status" value="1"/>
</dbReference>
<dbReference type="SUPFAM" id="SSF53335">
    <property type="entry name" value="S-adenosyl-L-methionine-dependent methyltransferases"/>
    <property type="match status" value="1"/>
</dbReference>
<proteinExistence type="inferred from homology"/>
<comment type="function">
    <text evidence="1">Specifically methylates the guanosine in position 1516 of 16S rRNA.</text>
</comment>
<comment type="catalytic activity">
    <reaction evidence="1">
        <text>guanosine(1516) in 16S rRNA + S-adenosyl-L-methionine = N(2)-methylguanosine(1516) in 16S rRNA + S-adenosyl-L-homocysteine + H(+)</text>
        <dbReference type="Rhea" id="RHEA:43220"/>
        <dbReference type="Rhea" id="RHEA-COMP:10412"/>
        <dbReference type="Rhea" id="RHEA-COMP:10413"/>
        <dbReference type="ChEBI" id="CHEBI:15378"/>
        <dbReference type="ChEBI" id="CHEBI:57856"/>
        <dbReference type="ChEBI" id="CHEBI:59789"/>
        <dbReference type="ChEBI" id="CHEBI:74269"/>
        <dbReference type="ChEBI" id="CHEBI:74481"/>
        <dbReference type="EC" id="2.1.1.242"/>
    </reaction>
</comment>
<comment type="subcellular location">
    <subcellularLocation>
        <location evidence="1">Cytoplasm</location>
    </subcellularLocation>
</comment>
<comment type="similarity">
    <text evidence="1">Belongs to the methyltransferase superfamily. RsmJ family.</text>
</comment>
<gene>
    <name evidence="1" type="primary">rsmJ</name>
    <name type="ordered locus">Shew_3647</name>
</gene>
<feature type="chain" id="PRO_0000292646" description="Ribosomal RNA small subunit methyltransferase J">
    <location>
        <begin position="1"/>
        <end position="259"/>
    </location>
</feature>
<feature type="binding site" evidence="1">
    <location>
        <begin position="107"/>
        <end position="108"/>
    </location>
    <ligand>
        <name>S-adenosyl-L-methionine</name>
        <dbReference type="ChEBI" id="CHEBI:59789"/>
    </ligand>
</feature>
<feature type="binding site" evidence="1">
    <location>
        <begin position="123"/>
        <end position="124"/>
    </location>
    <ligand>
        <name>S-adenosyl-L-methionine</name>
        <dbReference type="ChEBI" id="CHEBI:59789"/>
    </ligand>
</feature>
<feature type="binding site" evidence="1">
    <location>
        <begin position="159"/>
        <end position="160"/>
    </location>
    <ligand>
        <name>S-adenosyl-L-methionine</name>
        <dbReference type="ChEBI" id="CHEBI:59789"/>
    </ligand>
</feature>
<feature type="binding site" evidence="1">
    <location>
        <position position="177"/>
    </location>
    <ligand>
        <name>S-adenosyl-L-methionine</name>
        <dbReference type="ChEBI" id="CHEBI:59789"/>
    </ligand>
</feature>
<reference key="1">
    <citation type="submission" date="2007-03" db="EMBL/GenBank/DDBJ databases">
        <title>Complete sequence of Shewanella loihica PV-4.</title>
        <authorList>
            <consortium name="US DOE Joint Genome Institute"/>
            <person name="Copeland A."/>
            <person name="Lucas S."/>
            <person name="Lapidus A."/>
            <person name="Barry K."/>
            <person name="Detter J.C."/>
            <person name="Glavina del Rio T."/>
            <person name="Hammon N."/>
            <person name="Israni S."/>
            <person name="Dalin E."/>
            <person name="Tice H."/>
            <person name="Pitluck S."/>
            <person name="Chain P."/>
            <person name="Malfatti S."/>
            <person name="Shin M."/>
            <person name="Vergez L."/>
            <person name="Schmutz J."/>
            <person name="Larimer F."/>
            <person name="Land M."/>
            <person name="Hauser L."/>
            <person name="Kyrpides N."/>
            <person name="Mikhailova N."/>
            <person name="Romine M.F."/>
            <person name="Serres G."/>
            <person name="Fredrickson J."/>
            <person name="Tiedje J."/>
            <person name="Richardson P."/>
        </authorList>
    </citation>
    <scope>NUCLEOTIDE SEQUENCE [LARGE SCALE GENOMIC DNA]</scope>
    <source>
        <strain>ATCC BAA-1088 / PV-4</strain>
    </source>
</reference>
<protein>
    <recommendedName>
        <fullName evidence="1">Ribosomal RNA small subunit methyltransferase J</fullName>
        <ecNumber evidence="1">2.1.1.242</ecNumber>
    </recommendedName>
    <alternativeName>
        <fullName evidence="1">16S rRNA m2G1516 methyltransferase</fullName>
    </alternativeName>
    <alternativeName>
        <fullName evidence="1">rRNA (guanine-N(2)-)-methyltransferase</fullName>
    </alternativeName>
</protein>
<keyword id="KW-0963">Cytoplasm</keyword>
<keyword id="KW-0489">Methyltransferase</keyword>
<keyword id="KW-1185">Reference proteome</keyword>
<keyword id="KW-0698">rRNA processing</keyword>
<keyword id="KW-0949">S-adenosyl-L-methionine</keyword>
<keyword id="KW-0808">Transferase</keyword>
<sequence>MTASSTQPASVGIFFNRQYPTLEAVCDRWGLVFDENALFELVFEDNCLVLNKRDEPKLKGIFVDFVSGAVAHRRKFGGGRGQAIAKAVGLKQGVTPSVVDGTAGLGRDAFVLASLGCNVTMVERNPVVAALLEDGLRRAYEDADIGPWMQERMRLVHGSSLTALAELGEQVDVVYLDPMYPHREKSALVKKEMRVFQSLVGADLDADGLLAPAMALASKRVVVKRPDYAEDLDGVKPNTRIETKKNRFDVYVKAAMKSE</sequence>
<accession>A3QJ65</accession>